<proteinExistence type="evidence at protein level"/>
<comment type="function">
    <text evidence="2 3">Has primarily calcium-dependent phospholipase and lysophospholipase activities, with a major role in membrane lipid remodeling and biosynthesis of lipid mediators of the inflammatory response (By similarity). Plays an important role in embryo implantation and parturition through its ability to trigger prostanoid production (By similarity). Preferentially hydrolyzes the ester bond of the fatty acyl group attached at sn-2 position of phospholipids (phospholipase A2 activity). Selectively hydrolyzes sn-2 arachidonoyl group from membrane phospholipids, providing the precursor for eicosanoid biosynthesis via the cyclooxygenase pathway. In an alternative pathway of eicosanoid biosynthesis, hydrolyzes sn-2 fatty acyl chain of eicosanoid lysophopholipids to release free bioactive eicosanoids. Hydrolyzes the ester bond of the fatty acyl group attached at sn-1 position of phospholipids (phospholipase A1 activity) only if an ether linkage rather than an ester linkage is present at the sn-2 position. This hydrolysis is not stereospecific. Has calcium-independent phospholipase A2 and lysophospholipase activities in the presence of phosphoinositides. Has O-acyltransferase activity. Catalyzes the transfer of fatty acyl chains from phospholipids to a primary hydroxyl group of glycerol (sn-1 or sn-3), potentially contributing to monoacylglycerol synthesis (By similarity).</text>
</comment>
<comment type="catalytic activity">
    <reaction evidence="2">
        <text>a 1,2-diacyl-sn-glycero-3-phosphocholine + H2O = a 1-acyl-sn-glycero-3-phosphocholine + a fatty acid + H(+)</text>
        <dbReference type="Rhea" id="RHEA:15801"/>
        <dbReference type="ChEBI" id="CHEBI:15377"/>
        <dbReference type="ChEBI" id="CHEBI:15378"/>
        <dbReference type="ChEBI" id="CHEBI:28868"/>
        <dbReference type="ChEBI" id="CHEBI:57643"/>
        <dbReference type="ChEBI" id="CHEBI:58168"/>
        <dbReference type="EC" id="3.1.1.4"/>
    </reaction>
    <physiologicalReaction direction="left-to-right" evidence="2">
        <dbReference type="Rhea" id="RHEA:15802"/>
    </physiologicalReaction>
</comment>
<comment type="catalytic activity">
    <reaction evidence="2">
        <text>a 1-O-alkyl-2-acyl-sn-glycero-3-phosphocholine + H2O = a 1-O-alkyl-sn-glycero-3-phosphocholine + a fatty acid + H(+)</text>
        <dbReference type="Rhea" id="RHEA:36231"/>
        <dbReference type="ChEBI" id="CHEBI:15377"/>
        <dbReference type="ChEBI" id="CHEBI:15378"/>
        <dbReference type="ChEBI" id="CHEBI:28868"/>
        <dbReference type="ChEBI" id="CHEBI:30909"/>
        <dbReference type="ChEBI" id="CHEBI:36702"/>
        <dbReference type="EC" id="3.1.1.4"/>
    </reaction>
    <physiologicalReaction direction="left-to-right" evidence="2">
        <dbReference type="Rhea" id="RHEA:36232"/>
    </physiologicalReaction>
</comment>
<comment type="catalytic activity">
    <reaction evidence="2">
        <text>a 1-acyl-sn-glycero-3-phosphocholine + H2O = sn-glycerol 3-phosphocholine + a fatty acid + H(+)</text>
        <dbReference type="Rhea" id="RHEA:15177"/>
        <dbReference type="ChEBI" id="CHEBI:15377"/>
        <dbReference type="ChEBI" id="CHEBI:15378"/>
        <dbReference type="ChEBI" id="CHEBI:16870"/>
        <dbReference type="ChEBI" id="CHEBI:28868"/>
        <dbReference type="ChEBI" id="CHEBI:58168"/>
        <dbReference type="EC" id="3.1.1.5"/>
    </reaction>
    <physiologicalReaction direction="left-to-right" evidence="2">
        <dbReference type="Rhea" id="RHEA:15178"/>
    </physiologicalReaction>
</comment>
<comment type="catalytic activity">
    <reaction evidence="2">
        <text>1-hexadecanoyl-2-(5Z,8Z,11Z,14Z-eicosatetraenoyl)-sn-glycero-3-phosphocholine + H2O = 1-hexadecanoyl-sn-glycero-3-phosphocholine + (5Z,8Z,11Z,14Z)-eicosatetraenoate + H(+)</text>
        <dbReference type="Rhea" id="RHEA:40427"/>
        <dbReference type="ChEBI" id="CHEBI:15377"/>
        <dbReference type="ChEBI" id="CHEBI:15378"/>
        <dbReference type="ChEBI" id="CHEBI:32395"/>
        <dbReference type="ChEBI" id="CHEBI:72998"/>
        <dbReference type="ChEBI" id="CHEBI:73003"/>
    </reaction>
    <physiologicalReaction direction="left-to-right" evidence="2">
        <dbReference type="Rhea" id="RHEA:40428"/>
    </physiologicalReaction>
</comment>
<comment type="catalytic activity">
    <reaction evidence="2">
        <text>1,2-di-(5Z,8Z,11Z,14Z-eicosatetraenoyl)-sn-glycero-3-phosphocholine + H2O = 1-(5Z,8Z,11Z,14Z-eicosatetraenoyl)-sn-glycero-3-phosphocholine + (5Z,8Z,11Z,14Z)-eicosatetraenoate + H(+)</text>
        <dbReference type="Rhea" id="RHEA:41075"/>
        <dbReference type="ChEBI" id="CHEBI:15377"/>
        <dbReference type="ChEBI" id="CHEBI:15378"/>
        <dbReference type="ChEBI" id="CHEBI:32395"/>
        <dbReference type="ChEBI" id="CHEBI:60657"/>
        <dbReference type="ChEBI" id="CHEBI:74344"/>
    </reaction>
    <physiologicalReaction direction="left-to-right" evidence="2">
        <dbReference type="Rhea" id="RHEA:41076"/>
    </physiologicalReaction>
</comment>
<comment type="catalytic activity">
    <reaction evidence="2">
        <text>1-octadecanoyl-2-(5Z,8Z,11Z,14Z-eicosatetraenoyl)-sn-glycero-3-phosphocholine + H2O = 1-octadecanoyl-sn-glycero-3-phosphocholine + (5Z,8Z,11Z,14Z)-eicosatetraenoate + H(+)</text>
        <dbReference type="Rhea" id="RHEA:40519"/>
        <dbReference type="ChEBI" id="CHEBI:15377"/>
        <dbReference type="ChEBI" id="CHEBI:15378"/>
        <dbReference type="ChEBI" id="CHEBI:32395"/>
        <dbReference type="ChEBI" id="CHEBI:73858"/>
        <dbReference type="ChEBI" id="CHEBI:74965"/>
    </reaction>
    <physiologicalReaction direction="left-to-right" evidence="2">
        <dbReference type="Rhea" id="RHEA:40520"/>
    </physiologicalReaction>
</comment>
<comment type="catalytic activity">
    <reaction evidence="2">
        <text>1-hexadecanoyl-2-(9Z,12Z-octadecadienoyl)-sn-glycero-3-phosphocholine + H2O = (9Z,12Z)-octadecadienoate + 1-hexadecanoyl-sn-glycero-3-phosphocholine + H(+)</text>
        <dbReference type="Rhea" id="RHEA:40811"/>
        <dbReference type="ChEBI" id="CHEBI:15377"/>
        <dbReference type="ChEBI" id="CHEBI:15378"/>
        <dbReference type="ChEBI" id="CHEBI:30245"/>
        <dbReference type="ChEBI" id="CHEBI:72998"/>
        <dbReference type="ChEBI" id="CHEBI:73002"/>
    </reaction>
    <physiologicalReaction direction="left-to-right" evidence="2">
        <dbReference type="Rhea" id="RHEA:40812"/>
    </physiologicalReaction>
</comment>
<comment type="catalytic activity">
    <reaction evidence="2">
        <text>1-octadecanoyl-2-(9Z,12Z,15Z-octadecatrienoyl)-sn-glycero-3-phosphocholine + H2O = (9Z,12Z,15Z)-octadecatrienoate + 1-octadecanoyl-sn-glycero-3-phosphocholine + H(+)</text>
        <dbReference type="Rhea" id="RHEA:41307"/>
        <dbReference type="ChEBI" id="CHEBI:15377"/>
        <dbReference type="ChEBI" id="CHEBI:15378"/>
        <dbReference type="ChEBI" id="CHEBI:32387"/>
        <dbReference type="ChEBI" id="CHEBI:73858"/>
        <dbReference type="ChEBI" id="CHEBI:78022"/>
    </reaction>
    <physiologicalReaction direction="left-to-right" evidence="2">
        <dbReference type="Rhea" id="RHEA:41308"/>
    </physiologicalReaction>
</comment>
<comment type="catalytic activity">
    <reaction evidence="2">
        <text>1-(5Z,8Z,11Z,14Z-eicosatetraenoyl)-2-hexadecanoyl-sn-glycero-3-phosphocholine + H2O = 1-(5Z,8Z,11Z,14Z-eicosatetraenoyl)-sn-glycero-3-phosphocholine + hexadecanoate + H(+)</text>
        <dbReference type="Rhea" id="RHEA:41071"/>
        <dbReference type="ChEBI" id="CHEBI:7896"/>
        <dbReference type="ChEBI" id="CHEBI:15377"/>
        <dbReference type="ChEBI" id="CHEBI:15378"/>
        <dbReference type="ChEBI" id="CHEBI:74344"/>
        <dbReference type="ChEBI" id="CHEBI:77694"/>
    </reaction>
    <physiologicalReaction direction="left-to-right" evidence="2">
        <dbReference type="Rhea" id="RHEA:41072"/>
    </physiologicalReaction>
</comment>
<comment type="catalytic activity">
    <reaction evidence="2">
        <text>1-O-hexadecyl-2-(5Z,8Z,11Z,14Z)-eicosatetraenoyl-sn-glycero-3-phosphocholine + H2O = 1-O-hexadecyl-sn-glycero-3-phosphocholine + (5Z,8Z,11Z,14Z)-eicosatetraenoate + H(+)</text>
        <dbReference type="Rhea" id="RHEA:41067"/>
        <dbReference type="ChEBI" id="CHEBI:15377"/>
        <dbReference type="ChEBI" id="CHEBI:15378"/>
        <dbReference type="ChEBI" id="CHEBI:32395"/>
        <dbReference type="ChEBI" id="CHEBI:55430"/>
        <dbReference type="ChEBI" id="CHEBI:64496"/>
    </reaction>
    <physiologicalReaction direction="left-to-right" evidence="2">
        <dbReference type="Rhea" id="RHEA:41068"/>
    </physiologicalReaction>
</comment>
<comment type="catalytic activity">
    <reaction evidence="2">
        <text>1,2-di-(9Z-octadecenoyl)-sn-glycero-3-phospho-(1'-sn-glycerol) + H2O = 1-(9Z-octadecenoyl)-sn-glycero-3-phospho-(1'-sn-glycerol) + (9Z)-octadecenoate + H(+)</text>
        <dbReference type="Rhea" id="RHEA:41123"/>
        <dbReference type="ChEBI" id="CHEBI:15377"/>
        <dbReference type="ChEBI" id="CHEBI:15378"/>
        <dbReference type="ChEBI" id="CHEBI:30823"/>
        <dbReference type="ChEBI" id="CHEBI:72828"/>
        <dbReference type="ChEBI" id="CHEBI:75163"/>
    </reaction>
    <physiologicalReaction direction="left-to-right" evidence="2">
        <dbReference type="Rhea" id="RHEA:41124"/>
    </physiologicalReaction>
</comment>
<comment type="catalytic activity">
    <reaction evidence="2">
        <text>1-octadecanoyl-2-(5Z,8Z,11Z,14Z-eicosatetraenoyl)-sn-glycero-3-phosphate + H2O = 1-octadecanoyl-sn-glycero-3-phosphate + (5Z,8Z,11Z,14Z)-eicosatetraenoate + H(+)</text>
        <dbReference type="Rhea" id="RHEA:40451"/>
        <dbReference type="ChEBI" id="CHEBI:15377"/>
        <dbReference type="ChEBI" id="CHEBI:15378"/>
        <dbReference type="ChEBI" id="CHEBI:32395"/>
        <dbReference type="ChEBI" id="CHEBI:74565"/>
        <dbReference type="ChEBI" id="CHEBI:77091"/>
    </reaction>
    <physiologicalReaction direction="left-to-right" evidence="2">
        <dbReference type="Rhea" id="RHEA:40452"/>
    </physiologicalReaction>
</comment>
<comment type="catalytic activity">
    <reaction evidence="2">
        <text>1-hexadecanoyl-sn-glycero-3-phosphocholine + H2O = sn-glycerol 3-phosphocholine + hexadecanoate + H(+)</text>
        <dbReference type="Rhea" id="RHEA:40435"/>
        <dbReference type="ChEBI" id="CHEBI:7896"/>
        <dbReference type="ChEBI" id="CHEBI:15377"/>
        <dbReference type="ChEBI" id="CHEBI:15378"/>
        <dbReference type="ChEBI" id="CHEBI:16870"/>
        <dbReference type="ChEBI" id="CHEBI:72998"/>
    </reaction>
    <physiologicalReaction direction="left-to-right" evidence="2">
        <dbReference type="Rhea" id="RHEA:40436"/>
    </physiologicalReaction>
</comment>
<comment type="catalytic activity">
    <reaction evidence="2">
        <text>2-(prostaglandin E2)-sn-glycero-3-phosphoethanolamine + H2O = sn-glycero-3-phosphoethanolamine + prostaglandin E2 + H(+)</text>
        <dbReference type="Rhea" id="RHEA:53704"/>
        <dbReference type="ChEBI" id="CHEBI:15377"/>
        <dbReference type="ChEBI" id="CHEBI:15378"/>
        <dbReference type="ChEBI" id="CHEBI:137581"/>
        <dbReference type="ChEBI" id="CHEBI:143890"/>
        <dbReference type="ChEBI" id="CHEBI:606564"/>
    </reaction>
    <physiologicalReaction direction="left-to-right" evidence="2">
        <dbReference type="Rhea" id="RHEA:53705"/>
    </physiologicalReaction>
</comment>
<comment type="catalytic activity">
    <reaction evidence="2">
        <text>2-[(15S)-hydroxy-(5Z,8Z,11Z,13E)-eicosatetraenoyl]-sn-glycero-3-phosphocholine + H2O = (15S)-hydroxy-(5Z,8Z,11Z,13E)-eicosatetraenoate + sn-glycerol 3-phosphocholine + H(+)</text>
        <dbReference type="Rhea" id="RHEA:53700"/>
        <dbReference type="ChEBI" id="CHEBI:15377"/>
        <dbReference type="ChEBI" id="CHEBI:15378"/>
        <dbReference type="ChEBI" id="CHEBI:16870"/>
        <dbReference type="ChEBI" id="CHEBI:57409"/>
        <dbReference type="ChEBI" id="CHEBI:137584"/>
    </reaction>
    <physiologicalReaction direction="left-to-right" evidence="2">
        <dbReference type="Rhea" id="RHEA:53701"/>
    </physiologicalReaction>
</comment>
<comment type="catalytic activity">
    <reaction evidence="2">
        <text>2-[(15R)-hydroxy-(5Z,8Z,11Z,13E)-eicosatetraenoyl]-sn-glycero-3-phosphocholine + H2O = (15R)-hydroxy-(5Z,8Z,11Z,13E)-eicosatetraenoate + sn-glycerol 3-phosphocholine + H(+)</text>
        <dbReference type="Rhea" id="RHEA:53696"/>
        <dbReference type="ChEBI" id="CHEBI:15377"/>
        <dbReference type="ChEBI" id="CHEBI:15378"/>
        <dbReference type="ChEBI" id="CHEBI:16870"/>
        <dbReference type="ChEBI" id="CHEBI:78837"/>
        <dbReference type="ChEBI" id="CHEBI:137583"/>
    </reaction>
    <physiologicalReaction direction="left-to-right" evidence="2">
        <dbReference type="Rhea" id="RHEA:53697"/>
    </physiologicalReaction>
</comment>
<comment type="catalytic activity">
    <reaction evidence="2">
        <text>2-(prostaglandin E2)-sn-glycero-3-phosphocholine + H2O = prostaglandin E2 + sn-glycerol 3-phosphocholine + H(+)</text>
        <dbReference type="Rhea" id="RHEA:53692"/>
        <dbReference type="ChEBI" id="CHEBI:15377"/>
        <dbReference type="ChEBI" id="CHEBI:15378"/>
        <dbReference type="ChEBI" id="CHEBI:16870"/>
        <dbReference type="ChEBI" id="CHEBI:137585"/>
        <dbReference type="ChEBI" id="CHEBI:606564"/>
    </reaction>
    <physiologicalReaction direction="left-to-right" evidence="2">
        <dbReference type="Rhea" id="RHEA:53693"/>
    </physiologicalReaction>
</comment>
<comment type="catalytic activity">
    <reaction evidence="2">
        <text>2-[(11R)-hydroxy-(5Z,8Z,12E,14Z)-eicosatetraenoyl]-sn-glycero-3-phosphocholine + H2O = (11R)-hydroxy-(5Z,8Z,12E,14Z)-eicosatetraenoate + sn-glycerol 3-phosphocholine + H(+)</text>
        <dbReference type="Rhea" id="RHEA:53688"/>
        <dbReference type="ChEBI" id="CHEBI:15377"/>
        <dbReference type="ChEBI" id="CHEBI:15378"/>
        <dbReference type="ChEBI" id="CHEBI:16870"/>
        <dbReference type="ChEBI" id="CHEBI:78836"/>
        <dbReference type="ChEBI" id="CHEBI:137582"/>
    </reaction>
    <physiologicalReaction direction="left-to-right" evidence="2">
        <dbReference type="Rhea" id="RHEA:53689"/>
    </physiologicalReaction>
</comment>
<comment type="catalytic activity">
    <reaction evidence="2">
        <text>1-(5Z,8Z,11Z,14Z-eicosatetraenoyl)-2-O-hexadecyl-sn-glycero-3-phosphocholine + H2O = 2-O-hexadecyl-sn-glycero-3-phosphocholine + (5Z,8Z,11Z,14Z)-eicosatetraenoate + H(+)</text>
        <dbReference type="Rhea" id="RHEA:41271"/>
        <dbReference type="ChEBI" id="CHEBI:15377"/>
        <dbReference type="ChEBI" id="CHEBI:15378"/>
        <dbReference type="ChEBI" id="CHEBI:32395"/>
        <dbReference type="ChEBI" id="CHEBI:77695"/>
        <dbReference type="ChEBI" id="CHEBI:77696"/>
    </reaction>
    <physiologicalReaction direction="left-to-right" evidence="2">
        <dbReference type="Rhea" id="RHEA:41272"/>
    </physiologicalReaction>
</comment>
<comment type="catalytic activity">
    <reaction evidence="2">
        <text>1-octadecanoyl-2-(5Z,8Z,11Z,14Z-eicosatetraenoyl)-sn-glycero-3-phosphocholine + glycerol = 1-(5Z,8Z,11Z,14Z-eicosatetraenoyl)-glycerol + 1-octadecanoyl-sn-glycero-3-phosphocholine</text>
        <dbReference type="Rhea" id="RHEA:41099"/>
        <dbReference type="ChEBI" id="CHEBI:17754"/>
        <dbReference type="ChEBI" id="CHEBI:73858"/>
        <dbReference type="ChEBI" id="CHEBI:74965"/>
        <dbReference type="ChEBI" id="CHEBI:75612"/>
    </reaction>
    <physiologicalReaction direction="left-to-right" evidence="2">
        <dbReference type="Rhea" id="RHEA:41100"/>
    </physiologicalReaction>
</comment>
<comment type="catalytic activity">
    <reaction evidence="2">
        <text>1-octadecanoyl-2-(9Z,12Z,15Z-octadecatrienoyl)-sn-glycero-3-phosphocholine + glycerol = 1-(9Z,12Z,15Z-octadecatrienoyl)-glycerol + 1-octadecanoyl-sn-glycero-3-phosphocholine</text>
        <dbReference type="Rhea" id="RHEA:41087"/>
        <dbReference type="ChEBI" id="CHEBI:17754"/>
        <dbReference type="ChEBI" id="CHEBI:73858"/>
        <dbReference type="ChEBI" id="CHEBI:75610"/>
        <dbReference type="ChEBI" id="CHEBI:78022"/>
    </reaction>
    <physiologicalReaction direction="left-to-right" evidence="2">
        <dbReference type="Rhea" id="RHEA:41088"/>
    </physiologicalReaction>
</comment>
<comment type="activity regulation">
    <text evidence="2 3">Activated by cytosolic calcium, which is necessary for binding to membrane lipids. Activated by phosphorylation in response to mitogenic stimuli.</text>
</comment>
<comment type="pathway">
    <text evidence="2">Lipid metabolism; arachidonate metabolism.</text>
</comment>
<comment type="pathway">
    <text evidence="3">Membrane lipid metabolism; glycerophospholipid metabolism.</text>
</comment>
<comment type="pathway">
    <text evidence="2">Lipid metabolism; prostaglandin biosynthesis.</text>
</comment>
<comment type="pathway">
    <text evidence="2">Lipid metabolism; leukotriene B4 biosynthesis.</text>
</comment>
<comment type="subunit">
    <text evidence="2">Interacts with KAT5.</text>
</comment>
<comment type="subcellular location">
    <subcellularLocation>
        <location evidence="2">Cytoplasm</location>
    </subcellularLocation>
    <subcellularLocation>
        <location evidence="2">Golgi apparatus membrane</location>
    </subcellularLocation>
    <subcellularLocation>
        <location evidence="2">Nucleus envelope</location>
    </subcellularLocation>
    <text evidence="2">Translocates to intracellular membranes in a calcium-dependent way.</text>
</comment>
<comment type="tissue specificity">
    <text evidence="7">In brain tissue, expressed in low levels in olfactory mitral and granule cells, in hippocampal pyramidal cells and in dentate and cerebellar granule cells.</text>
</comment>
<comment type="induction">
    <text evidence="7">Levels of rat CPLA2 are increased in dentate granule cells during ischemia.</text>
</comment>
<comment type="domain">
    <text evidence="2">The N-terminal C2 domain associates with lipid membranes upon calcium binding. It modulates enzyme activity by presenting the active site to its substrate in response to elevations of cytosolic calcium. In the presence of phosphoinositides, regulates phospholipase A2 and lysophospholipase activities in a calcium-independent way.</text>
</comment>
<comment type="PTM">
    <text evidence="2">Phosphorylated at both Ser-505 and Ser-727 in response to mitogenic stimuli.</text>
</comment>
<protein>
    <recommendedName>
        <fullName>Cytosolic phospholipase A2</fullName>
        <shortName>cPLA2</shortName>
    </recommendedName>
    <alternativeName>
        <fullName>Phospholipase A2 group IVA</fullName>
    </alternativeName>
    <domain>
        <recommendedName>
            <fullName>Phospholipase A2</fullName>
            <ecNumber evidence="2">3.1.1.4</ecNumber>
        </recommendedName>
        <alternativeName>
            <fullName>Phosphatidylcholine 2-acylhydrolase</fullName>
        </alternativeName>
    </domain>
    <domain>
        <recommendedName>
            <fullName>Lysophospholipase</fullName>
            <ecNumber evidence="2">3.1.1.5</ecNumber>
        </recommendedName>
    </domain>
</protein>
<evidence type="ECO:0000250" key="1"/>
<evidence type="ECO:0000250" key="2">
    <source>
        <dbReference type="UniProtKB" id="P47712"/>
    </source>
</evidence>
<evidence type="ECO:0000250" key="3">
    <source>
        <dbReference type="UniProtKB" id="P47713"/>
    </source>
</evidence>
<evidence type="ECO:0000255" key="4">
    <source>
        <dbReference type="PROSITE-ProRule" id="PRU00041"/>
    </source>
</evidence>
<evidence type="ECO:0000255" key="5">
    <source>
        <dbReference type="PROSITE-ProRule" id="PRU00555"/>
    </source>
</evidence>
<evidence type="ECO:0000256" key="6">
    <source>
        <dbReference type="SAM" id="MobiDB-lite"/>
    </source>
</evidence>
<evidence type="ECO:0000269" key="7">
    <source>
    </source>
</evidence>
<evidence type="ECO:0000305" key="8"/>
<evidence type="ECO:0007744" key="9">
    <source>
    </source>
</evidence>
<reference key="1">
    <citation type="journal article" date="1994" name="Brain Res. Mol. Brain Res.">
        <title>Molecular cloning of rat cDNA for cytosolic phospholipase A2 and the increased gene expression in the dentate gyrus following transient forebrain ischemia.</title>
        <authorList>
            <person name="Owada Y."/>
            <person name="Tominaga T."/>
            <person name="Yoshimoto T."/>
            <person name="Kondo H."/>
        </authorList>
    </citation>
    <scope>NUCLEOTIDE SEQUENCE [MRNA]</scope>
    <scope>TISSUE SPECIFICITY</scope>
    <scope>INDUCTION</scope>
    <source>
        <tissue>Brain</tissue>
    </source>
</reference>
<reference key="2">
    <citation type="journal article" date="1994" name="Brain Res. Mol. Brain Res.">
        <authorList>
            <person name="Owada Y."/>
            <person name="Tominaga T."/>
            <person name="Yoshimoto T."/>
            <person name="Kondo H."/>
        </authorList>
    </citation>
    <scope>ERRATUM OF PUBMED:7808237</scope>
</reference>
<reference key="3">
    <citation type="journal article" date="1998" name="Biochim. Biophys. Acta">
        <title>Cloning and expression of a group IV cytosolic Ca2+-dependent phospholipase A2 from rat pancreatic islets. Comparison of the expressed activity with that of an islet group VI cytosolic Ca2+-independent phospholipase A2.</title>
        <authorList>
            <person name="Ma Z."/>
            <person name="Ramanadham S."/>
            <person name="Hu Z."/>
            <person name="Turk J."/>
        </authorList>
    </citation>
    <scope>NUCLEOTIDE SEQUENCE [MRNA]</scope>
    <source>
        <strain>Sprague-Dawley</strain>
        <tissue>Pancreatic islet</tissue>
    </source>
</reference>
<reference key="4">
    <citation type="journal article" date="2012" name="Nat. Commun.">
        <title>Quantitative maps of protein phosphorylation sites across 14 different rat organs and tissues.</title>
        <authorList>
            <person name="Lundby A."/>
            <person name="Secher A."/>
            <person name="Lage K."/>
            <person name="Nordsborg N.B."/>
            <person name="Dmytriyev A."/>
            <person name="Lundby C."/>
            <person name="Olsen J.V."/>
        </authorList>
    </citation>
    <scope>PHOSPHORYLATION [LARGE SCALE ANALYSIS] AT SER-434; SER-437; SER-511; SER-515 AND SER-727</scope>
    <scope>IDENTIFICATION BY MASS SPECTROMETRY [LARGE SCALE ANALYSIS]</scope>
</reference>
<name>PA24A_RAT</name>
<organism>
    <name type="scientific">Rattus norvegicus</name>
    <name type="common">Rat</name>
    <dbReference type="NCBI Taxonomy" id="10116"/>
    <lineage>
        <taxon>Eukaryota</taxon>
        <taxon>Metazoa</taxon>
        <taxon>Chordata</taxon>
        <taxon>Craniata</taxon>
        <taxon>Vertebrata</taxon>
        <taxon>Euteleostomi</taxon>
        <taxon>Mammalia</taxon>
        <taxon>Eutheria</taxon>
        <taxon>Euarchontoglires</taxon>
        <taxon>Glires</taxon>
        <taxon>Rodentia</taxon>
        <taxon>Myomorpha</taxon>
        <taxon>Muroidea</taxon>
        <taxon>Muridae</taxon>
        <taxon>Murinae</taxon>
        <taxon>Rattus</taxon>
    </lineage>
</organism>
<gene>
    <name type="primary">Pla2g4a</name>
    <name type="synonym">Cpla2</name>
    <name type="synonym">Pla2g4</name>
</gene>
<dbReference type="EC" id="3.1.1.4" evidence="2"/>
<dbReference type="EC" id="3.1.1.5" evidence="2"/>
<dbReference type="EMBL" id="S77829">
    <property type="protein sequence ID" value="AAB33847.1"/>
    <property type="molecule type" value="mRNA"/>
</dbReference>
<dbReference type="EMBL" id="U38376">
    <property type="protein sequence ID" value="AAC21591.1"/>
    <property type="molecule type" value="mRNA"/>
</dbReference>
<dbReference type="BMRB" id="P50393"/>
<dbReference type="SMR" id="P50393"/>
<dbReference type="FunCoup" id="P50393">
    <property type="interactions" value="199"/>
</dbReference>
<dbReference type="STRING" id="10116.ENSRNOP00000075329"/>
<dbReference type="iPTMnet" id="P50393"/>
<dbReference type="PhosphoSitePlus" id="P50393"/>
<dbReference type="PaxDb" id="10116-ENSRNOP00000003630"/>
<dbReference type="UCSC" id="RGD:67366">
    <property type="organism name" value="rat"/>
</dbReference>
<dbReference type="AGR" id="RGD:67366"/>
<dbReference type="RGD" id="67366">
    <property type="gene designation" value="Pla2g4a"/>
</dbReference>
<dbReference type="eggNOG" id="KOG1012">
    <property type="taxonomic scope" value="Eukaryota"/>
</dbReference>
<dbReference type="eggNOG" id="KOG1325">
    <property type="taxonomic scope" value="Eukaryota"/>
</dbReference>
<dbReference type="InParanoid" id="P50393"/>
<dbReference type="PhylomeDB" id="P50393"/>
<dbReference type="Reactome" id="R-RNO-111995">
    <property type="pathway name" value="phospho-PLA2 pathway"/>
</dbReference>
<dbReference type="Reactome" id="R-RNO-1482788">
    <property type="pathway name" value="Acyl chain remodelling of PC"/>
</dbReference>
<dbReference type="Reactome" id="R-RNO-1482798">
    <property type="pathway name" value="Acyl chain remodeling of CL"/>
</dbReference>
<dbReference type="Reactome" id="R-RNO-1482801">
    <property type="pathway name" value="Acyl chain remodelling of PS"/>
</dbReference>
<dbReference type="Reactome" id="R-RNO-1482839">
    <property type="pathway name" value="Acyl chain remodelling of PE"/>
</dbReference>
<dbReference type="Reactome" id="R-RNO-1482922">
    <property type="pathway name" value="Acyl chain remodelling of PI"/>
</dbReference>
<dbReference type="Reactome" id="R-RNO-1482925">
    <property type="pathway name" value="Acyl chain remodelling of PG"/>
</dbReference>
<dbReference type="Reactome" id="R-RNO-1483115">
    <property type="pathway name" value="Hydrolysis of LPC"/>
</dbReference>
<dbReference type="Reactome" id="R-RNO-1483166">
    <property type="pathway name" value="Synthesis of PA"/>
</dbReference>
<dbReference type="Reactome" id="R-RNO-2142753">
    <property type="pathway name" value="Arachidonate metabolism"/>
</dbReference>
<dbReference type="Reactome" id="R-RNO-418592">
    <property type="pathway name" value="ADP signalling through P2Y purinoceptor 1"/>
</dbReference>
<dbReference type="Reactome" id="R-RNO-432142">
    <property type="pathway name" value="Platelet sensitization by LDL"/>
</dbReference>
<dbReference type="Reactome" id="R-RNO-6811436">
    <property type="pathway name" value="COPI-independent Golgi-to-ER retrograde traffic"/>
</dbReference>
<dbReference type="UniPathway" id="UPA00383"/>
<dbReference type="UniPathway" id="UPA00662"/>
<dbReference type="UniPathway" id="UPA00878"/>
<dbReference type="UniPathway" id="UPA00940"/>
<dbReference type="PRO" id="PR:P50393"/>
<dbReference type="Proteomes" id="UP000002494">
    <property type="component" value="Unplaced"/>
</dbReference>
<dbReference type="GO" id="GO:0005737">
    <property type="term" value="C:cytoplasm"/>
    <property type="evidence" value="ECO:0000266"/>
    <property type="project" value="RGD"/>
</dbReference>
<dbReference type="GO" id="GO:0005829">
    <property type="term" value="C:cytosol"/>
    <property type="evidence" value="ECO:0000266"/>
    <property type="project" value="RGD"/>
</dbReference>
<dbReference type="GO" id="GO:0005783">
    <property type="term" value="C:endoplasmic reticulum"/>
    <property type="evidence" value="ECO:0000266"/>
    <property type="project" value="RGD"/>
</dbReference>
<dbReference type="GO" id="GO:0005794">
    <property type="term" value="C:Golgi apparatus"/>
    <property type="evidence" value="ECO:0000266"/>
    <property type="project" value="RGD"/>
</dbReference>
<dbReference type="GO" id="GO:0000139">
    <property type="term" value="C:Golgi membrane"/>
    <property type="evidence" value="ECO:0000250"/>
    <property type="project" value="UniProtKB"/>
</dbReference>
<dbReference type="GO" id="GO:0005635">
    <property type="term" value="C:nuclear envelope"/>
    <property type="evidence" value="ECO:0000250"/>
    <property type="project" value="UniProtKB"/>
</dbReference>
<dbReference type="GO" id="GO:0005634">
    <property type="term" value="C:nucleus"/>
    <property type="evidence" value="ECO:0000318"/>
    <property type="project" value="GO_Central"/>
</dbReference>
<dbReference type="GO" id="GO:0048471">
    <property type="term" value="C:perinuclear region of cytoplasm"/>
    <property type="evidence" value="ECO:0000314"/>
    <property type="project" value="RGD"/>
</dbReference>
<dbReference type="GO" id="GO:0042588">
    <property type="term" value="C:zymogen granule"/>
    <property type="evidence" value="ECO:0000314"/>
    <property type="project" value="RGD"/>
</dbReference>
<dbReference type="GO" id="GO:0005509">
    <property type="term" value="F:calcium ion binding"/>
    <property type="evidence" value="ECO:0000250"/>
    <property type="project" value="UniProtKB"/>
</dbReference>
<dbReference type="GO" id="GO:0047498">
    <property type="term" value="F:calcium-dependent phospholipase A2 activity"/>
    <property type="evidence" value="ECO:0000314"/>
    <property type="project" value="RGD"/>
</dbReference>
<dbReference type="GO" id="GO:0005544">
    <property type="term" value="F:calcium-dependent phospholipid binding"/>
    <property type="evidence" value="ECO:0000250"/>
    <property type="project" value="UniProtKB"/>
</dbReference>
<dbReference type="GO" id="GO:0047499">
    <property type="term" value="F:calcium-independent phospholipase A2 activity"/>
    <property type="evidence" value="ECO:0000266"/>
    <property type="project" value="RGD"/>
</dbReference>
<dbReference type="GO" id="GO:1902387">
    <property type="term" value="F:ceramide 1-phosphate binding"/>
    <property type="evidence" value="ECO:0000250"/>
    <property type="project" value="UniProtKB"/>
</dbReference>
<dbReference type="GO" id="GO:0035035">
    <property type="term" value="F:histone acetyltransferase binding"/>
    <property type="evidence" value="ECO:0000353"/>
    <property type="project" value="RGD"/>
</dbReference>
<dbReference type="GO" id="GO:0004622">
    <property type="term" value="F:lysophospholipase activity"/>
    <property type="evidence" value="ECO:0000250"/>
    <property type="project" value="UniProtKB"/>
</dbReference>
<dbReference type="GO" id="GO:0008374">
    <property type="term" value="F:O-acyltransferase activity"/>
    <property type="evidence" value="ECO:0000250"/>
    <property type="project" value="UniProtKB"/>
</dbReference>
<dbReference type="GO" id="GO:0032266">
    <property type="term" value="F:phosphatidylinositol-3-phosphate binding"/>
    <property type="evidence" value="ECO:0000250"/>
    <property type="project" value="UniProtKB"/>
</dbReference>
<dbReference type="GO" id="GO:0070273">
    <property type="term" value="F:phosphatidylinositol-4-phosphate binding"/>
    <property type="evidence" value="ECO:0000250"/>
    <property type="project" value="UniProtKB"/>
</dbReference>
<dbReference type="GO" id="GO:0010314">
    <property type="term" value="F:phosphatidylinositol-5-phosphate binding"/>
    <property type="evidence" value="ECO:0000250"/>
    <property type="project" value="UniProtKB"/>
</dbReference>
<dbReference type="GO" id="GO:0004623">
    <property type="term" value="F:phospholipase A2 activity"/>
    <property type="evidence" value="ECO:0000266"/>
    <property type="project" value="RGD"/>
</dbReference>
<dbReference type="GO" id="GO:0019369">
    <property type="term" value="P:arachidonate metabolic process"/>
    <property type="evidence" value="ECO:0000315"/>
    <property type="project" value="RGD"/>
</dbReference>
<dbReference type="GO" id="GO:0050482">
    <property type="term" value="P:arachidonate secretion"/>
    <property type="evidence" value="ECO:0000266"/>
    <property type="project" value="RGD"/>
</dbReference>
<dbReference type="GO" id="GO:0071236">
    <property type="term" value="P:cellular response to antibiotic"/>
    <property type="evidence" value="ECO:0000266"/>
    <property type="project" value="RGD"/>
</dbReference>
<dbReference type="GO" id="GO:1905375">
    <property type="term" value="P:cellular response to homocysteine"/>
    <property type="evidence" value="ECO:0000270"/>
    <property type="project" value="RGD"/>
</dbReference>
<dbReference type="GO" id="GO:0046697">
    <property type="term" value="P:decidualization"/>
    <property type="evidence" value="ECO:0000315"/>
    <property type="project" value="RGD"/>
</dbReference>
<dbReference type="GO" id="GO:0051649">
    <property type="term" value="P:establishment of localization in cell"/>
    <property type="evidence" value="ECO:0000266"/>
    <property type="project" value="RGD"/>
</dbReference>
<dbReference type="GO" id="GO:0006071">
    <property type="term" value="P:glycerol metabolic process"/>
    <property type="evidence" value="ECO:0007669"/>
    <property type="project" value="UniProtKB-KW"/>
</dbReference>
<dbReference type="GO" id="GO:0046475">
    <property type="term" value="P:glycerophospholipid catabolic process"/>
    <property type="evidence" value="ECO:0000318"/>
    <property type="project" value="GO_Central"/>
</dbReference>
<dbReference type="GO" id="GO:0046456">
    <property type="term" value="P:icosanoid biosynthetic process"/>
    <property type="evidence" value="ECO:0000266"/>
    <property type="project" value="RGD"/>
</dbReference>
<dbReference type="GO" id="GO:0019370">
    <property type="term" value="P:leukotriene biosynthetic process"/>
    <property type="evidence" value="ECO:0000266"/>
    <property type="project" value="RGD"/>
</dbReference>
<dbReference type="GO" id="GO:0001554">
    <property type="term" value="P:luteolysis"/>
    <property type="evidence" value="ECO:0000270"/>
    <property type="project" value="RGD"/>
</dbReference>
<dbReference type="GO" id="GO:0006640">
    <property type="term" value="P:monoacylglycerol biosynthetic process"/>
    <property type="evidence" value="ECO:0000250"/>
    <property type="project" value="UniProtKB"/>
</dbReference>
<dbReference type="GO" id="GO:0001542">
    <property type="term" value="P:ovulation from ovarian follicle"/>
    <property type="evidence" value="ECO:0000315"/>
    <property type="project" value="RGD"/>
</dbReference>
<dbReference type="GO" id="GO:0036151">
    <property type="term" value="P:phosphatidylcholine acyl-chain remodeling"/>
    <property type="evidence" value="ECO:0000266"/>
    <property type="project" value="RGD"/>
</dbReference>
<dbReference type="GO" id="GO:0034638">
    <property type="term" value="P:phosphatidylcholine catabolic process"/>
    <property type="evidence" value="ECO:0000250"/>
    <property type="project" value="UniProtKB"/>
</dbReference>
<dbReference type="GO" id="GO:0034478">
    <property type="term" value="P:phosphatidylglycerol catabolic process"/>
    <property type="evidence" value="ECO:0000250"/>
    <property type="project" value="UniProtKB"/>
</dbReference>
<dbReference type="GO" id="GO:0006663">
    <property type="term" value="P:platelet activating factor biosynthetic process"/>
    <property type="evidence" value="ECO:0000266"/>
    <property type="project" value="RGD"/>
</dbReference>
<dbReference type="GO" id="GO:0043065">
    <property type="term" value="P:positive regulation of apoptotic process"/>
    <property type="evidence" value="ECO:0000315"/>
    <property type="project" value="RGD"/>
</dbReference>
<dbReference type="GO" id="GO:0030501">
    <property type="term" value="P:positive regulation of bone mineralization"/>
    <property type="evidence" value="ECO:0000270"/>
    <property type="project" value="RGD"/>
</dbReference>
<dbReference type="GO" id="GO:0008284">
    <property type="term" value="P:positive regulation of cell population proliferation"/>
    <property type="evidence" value="ECO:0000315"/>
    <property type="project" value="RGD"/>
</dbReference>
<dbReference type="GO" id="GO:0031622">
    <property type="term" value="P:positive regulation of fever generation"/>
    <property type="evidence" value="ECO:0000270"/>
    <property type="project" value="RGD"/>
</dbReference>
<dbReference type="GO" id="GO:0043032">
    <property type="term" value="P:positive regulation of macrophage activation"/>
    <property type="evidence" value="ECO:0000266"/>
    <property type="project" value="RGD"/>
</dbReference>
<dbReference type="GO" id="GO:0010572">
    <property type="term" value="P:positive regulation of platelet activation"/>
    <property type="evidence" value="ECO:0000266"/>
    <property type="project" value="RGD"/>
</dbReference>
<dbReference type="GO" id="GO:0031394">
    <property type="term" value="P:positive regulation of prostaglandin biosynthetic process"/>
    <property type="evidence" value="ECO:0000315"/>
    <property type="project" value="RGD"/>
</dbReference>
<dbReference type="GO" id="GO:0032308">
    <property type="term" value="P:positive regulation of prostaglandin secretion"/>
    <property type="evidence" value="ECO:0000266"/>
    <property type="project" value="RGD"/>
</dbReference>
<dbReference type="GO" id="GO:0002827">
    <property type="term" value="P:positive regulation of T-helper 1 type immune response"/>
    <property type="evidence" value="ECO:0000266"/>
    <property type="project" value="RGD"/>
</dbReference>
<dbReference type="GO" id="GO:0031340">
    <property type="term" value="P:positive regulation of vesicle fusion"/>
    <property type="evidence" value="ECO:0000315"/>
    <property type="project" value="RGD"/>
</dbReference>
<dbReference type="GO" id="GO:0001516">
    <property type="term" value="P:prostaglandin biosynthetic process"/>
    <property type="evidence" value="ECO:0000250"/>
    <property type="project" value="UniProtKB"/>
</dbReference>
<dbReference type="GO" id="GO:0042127">
    <property type="term" value="P:regulation of cell population proliferation"/>
    <property type="evidence" value="ECO:0000266"/>
    <property type="project" value="RGD"/>
</dbReference>
<dbReference type="GO" id="GO:0051592">
    <property type="term" value="P:response to calcium ion"/>
    <property type="evidence" value="ECO:0000315"/>
    <property type="project" value="RGD"/>
</dbReference>
<dbReference type="GO" id="GO:0051384">
    <property type="term" value="P:response to glucocorticoid"/>
    <property type="evidence" value="ECO:0000270"/>
    <property type="project" value="RGD"/>
</dbReference>
<dbReference type="GO" id="GO:0009725">
    <property type="term" value="P:response to hormone"/>
    <property type="evidence" value="ECO:0000270"/>
    <property type="project" value="RGD"/>
</dbReference>
<dbReference type="GO" id="GO:0042542">
    <property type="term" value="P:response to hydrogen peroxide"/>
    <property type="evidence" value="ECO:0000270"/>
    <property type="project" value="RGD"/>
</dbReference>
<dbReference type="GO" id="GO:0032496">
    <property type="term" value="P:response to lipopolysaccharide"/>
    <property type="evidence" value="ECO:0000270"/>
    <property type="project" value="RGD"/>
</dbReference>
<dbReference type="GO" id="GO:0051597">
    <property type="term" value="P:response to methylmercury"/>
    <property type="evidence" value="ECO:0000270"/>
    <property type="project" value="RGD"/>
</dbReference>
<dbReference type="GO" id="GO:0033280">
    <property type="term" value="P:response to vitamin D"/>
    <property type="evidence" value="ECO:0000270"/>
    <property type="project" value="RGD"/>
</dbReference>
<dbReference type="GO" id="GO:0043129">
    <property type="term" value="P:surfactant homeostasis"/>
    <property type="evidence" value="ECO:0000315"/>
    <property type="project" value="RGD"/>
</dbReference>
<dbReference type="CDD" id="cd04036">
    <property type="entry name" value="C2_cPLA2"/>
    <property type="match status" value="1"/>
</dbReference>
<dbReference type="CDD" id="cd07200">
    <property type="entry name" value="cPLA2_Grp-IVA"/>
    <property type="match status" value="1"/>
</dbReference>
<dbReference type="FunFam" id="2.60.40.150:FF:000030">
    <property type="entry name" value="Phospholipase A2"/>
    <property type="match status" value="1"/>
</dbReference>
<dbReference type="Gene3D" id="2.60.40.150">
    <property type="entry name" value="C2 domain"/>
    <property type="match status" value="1"/>
</dbReference>
<dbReference type="Gene3D" id="3.40.1090.10">
    <property type="entry name" value="Cytosolic phospholipase A2 catalytic domain"/>
    <property type="match status" value="1"/>
</dbReference>
<dbReference type="InterPro" id="IPR016035">
    <property type="entry name" value="Acyl_Trfase/lysoPLipase"/>
</dbReference>
<dbReference type="InterPro" id="IPR041847">
    <property type="entry name" value="C2_cPLA2"/>
</dbReference>
<dbReference type="InterPro" id="IPR000008">
    <property type="entry name" value="C2_dom"/>
</dbReference>
<dbReference type="InterPro" id="IPR035892">
    <property type="entry name" value="C2_domain_sf"/>
</dbReference>
<dbReference type="InterPro" id="IPR002642">
    <property type="entry name" value="LysoPLipase_cat_dom"/>
</dbReference>
<dbReference type="PANTHER" id="PTHR10728">
    <property type="entry name" value="CYTOSOLIC PHOSPHOLIPASE A2"/>
    <property type="match status" value="1"/>
</dbReference>
<dbReference type="PANTHER" id="PTHR10728:SF13">
    <property type="entry name" value="CYTOSOLIC PHOSPHOLIPASE A2"/>
    <property type="match status" value="1"/>
</dbReference>
<dbReference type="Pfam" id="PF00168">
    <property type="entry name" value="C2"/>
    <property type="match status" value="1"/>
</dbReference>
<dbReference type="Pfam" id="PF01735">
    <property type="entry name" value="PLA2_B"/>
    <property type="match status" value="1"/>
</dbReference>
<dbReference type="SMART" id="SM00239">
    <property type="entry name" value="C2"/>
    <property type="match status" value="1"/>
</dbReference>
<dbReference type="SMART" id="SM00022">
    <property type="entry name" value="PLAc"/>
    <property type="match status" value="1"/>
</dbReference>
<dbReference type="SUPFAM" id="SSF49562">
    <property type="entry name" value="C2 domain (Calcium/lipid-binding domain, CaLB)"/>
    <property type="match status" value="1"/>
</dbReference>
<dbReference type="SUPFAM" id="SSF52151">
    <property type="entry name" value="FabD/lysophospholipase-like"/>
    <property type="match status" value="1"/>
</dbReference>
<dbReference type="PROSITE" id="PS50004">
    <property type="entry name" value="C2"/>
    <property type="match status" value="1"/>
</dbReference>
<dbReference type="PROSITE" id="PS51210">
    <property type="entry name" value="PLA2C"/>
    <property type="match status" value="1"/>
</dbReference>
<keyword id="KW-0106">Calcium</keyword>
<keyword id="KW-0963">Cytoplasm</keyword>
<keyword id="KW-0275">Fatty acid biosynthesis</keyword>
<keyword id="KW-0276">Fatty acid metabolism</keyword>
<keyword id="KW-0319">Glycerol metabolism</keyword>
<keyword id="KW-0333">Golgi apparatus</keyword>
<keyword id="KW-0378">Hydrolase</keyword>
<keyword id="KW-1017">Isopeptide bond</keyword>
<keyword id="KW-0434">Leukotriene biosynthesis</keyword>
<keyword id="KW-0444">Lipid biosynthesis</keyword>
<keyword id="KW-0442">Lipid degradation</keyword>
<keyword id="KW-0443">Lipid metabolism</keyword>
<keyword id="KW-0446">Lipid-binding</keyword>
<keyword id="KW-0472">Membrane</keyword>
<keyword id="KW-0479">Metal-binding</keyword>
<keyword id="KW-0539">Nucleus</keyword>
<keyword id="KW-0595">Phospholipid degradation</keyword>
<keyword id="KW-1208">Phospholipid metabolism</keyword>
<keyword id="KW-0597">Phosphoprotein</keyword>
<keyword id="KW-0643">Prostaglandin biosynthesis</keyword>
<keyword id="KW-0644">Prostaglandin metabolism</keyword>
<keyword id="KW-1185">Reference proteome</keyword>
<keyword id="KW-0832">Ubl conjugation</keyword>
<accession>P50393</accession>
<feature type="chain" id="PRO_0000187264" description="Cytosolic phospholipase A2">
    <location>
        <begin position="1"/>
        <end position="752"/>
    </location>
</feature>
<feature type="domain" description="C2" evidence="4">
    <location>
        <begin position="6"/>
        <end position="122"/>
    </location>
</feature>
<feature type="domain" description="PLA2c" evidence="5">
    <location>
        <begin position="140"/>
        <end position="740"/>
    </location>
</feature>
<feature type="region of interest" description="Phospholipid binding" evidence="8">
    <location>
        <begin position="1"/>
        <end position="178"/>
    </location>
</feature>
<feature type="region of interest" description="Disordered" evidence="6">
    <location>
        <begin position="427"/>
        <end position="457"/>
    </location>
</feature>
<feature type="active site" description="Nucleophile" evidence="1">
    <location>
        <position position="228"/>
    </location>
</feature>
<feature type="active site" description="Proton acceptor" evidence="1">
    <location>
        <position position="549"/>
    </location>
</feature>
<feature type="binding site" evidence="1">
    <location>
        <position position="40"/>
    </location>
    <ligand>
        <name>Ca(2+)</name>
        <dbReference type="ChEBI" id="CHEBI:29108"/>
        <label>1</label>
    </ligand>
</feature>
<feature type="binding site" evidence="1">
    <location>
        <position position="40"/>
    </location>
    <ligand>
        <name>Ca(2+)</name>
        <dbReference type="ChEBI" id="CHEBI:29108"/>
        <label>2</label>
    </ligand>
</feature>
<feature type="binding site" evidence="1">
    <location>
        <position position="41"/>
    </location>
    <ligand>
        <name>Ca(2+)</name>
        <dbReference type="ChEBI" id="CHEBI:29108"/>
        <label>1</label>
    </ligand>
</feature>
<feature type="binding site" evidence="1">
    <location>
        <position position="43"/>
    </location>
    <ligand>
        <name>Ca(2+)</name>
        <dbReference type="ChEBI" id="CHEBI:29108"/>
        <label>1</label>
    </ligand>
</feature>
<feature type="binding site" evidence="1">
    <location>
        <position position="43"/>
    </location>
    <ligand>
        <name>Ca(2+)</name>
        <dbReference type="ChEBI" id="CHEBI:29108"/>
        <label>2</label>
    </ligand>
</feature>
<feature type="binding site" evidence="1">
    <location>
        <position position="65"/>
    </location>
    <ligand>
        <name>Ca(2+)</name>
        <dbReference type="ChEBI" id="CHEBI:29108"/>
        <label>1</label>
    </ligand>
</feature>
<feature type="binding site" evidence="1">
    <location>
        <position position="93"/>
    </location>
    <ligand>
        <name>Ca(2+)</name>
        <dbReference type="ChEBI" id="CHEBI:29108"/>
        <label>2</label>
    </ligand>
</feature>
<feature type="binding site" evidence="1">
    <location>
        <position position="94"/>
    </location>
    <ligand>
        <name>Ca(2+)</name>
        <dbReference type="ChEBI" id="CHEBI:29108"/>
        <label>2</label>
    </ligand>
</feature>
<feature type="binding site" evidence="1">
    <location>
        <position position="95"/>
    </location>
    <ligand>
        <name>Ca(2+)</name>
        <dbReference type="ChEBI" id="CHEBI:29108"/>
        <label>2</label>
    </ligand>
</feature>
<feature type="modified residue" description="Phosphoserine" evidence="2">
    <location>
        <position position="2"/>
    </location>
</feature>
<feature type="modified residue" description="Phosphothreonine" evidence="2">
    <location>
        <position position="268"/>
    </location>
</feature>
<feature type="modified residue" description="Phosphoserine" evidence="9">
    <location>
        <position position="434"/>
    </location>
</feature>
<feature type="modified residue" description="Phosphoserine" evidence="2">
    <location>
        <position position="435"/>
    </location>
</feature>
<feature type="modified residue" description="Phosphoserine" evidence="9">
    <location>
        <position position="437"/>
    </location>
</feature>
<feature type="modified residue" description="Phosphoserine; by MAPK" evidence="2">
    <location>
        <position position="505"/>
    </location>
</feature>
<feature type="modified residue" description="Phosphoserine" evidence="9">
    <location>
        <position position="511"/>
    </location>
</feature>
<feature type="modified residue" description="Phosphoserine" evidence="9">
    <location>
        <position position="515"/>
    </location>
</feature>
<feature type="modified residue" description="Phosphoserine" evidence="9">
    <location>
        <position position="727"/>
    </location>
</feature>
<feature type="modified residue" description="Phosphoserine" evidence="2">
    <location>
        <position position="729"/>
    </location>
</feature>
<feature type="cross-link" description="Glycyl lysine isopeptide (Lys-Gly) (interchain with G-Cter in SUMO2)" evidence="2">
    <location>
        <position position="541"/>
    </location>
</feature>
<feature type="cross-link" description="Glycyl lysine isopeptide (Lys-Gly) (interchain with G-Cter in SUMO2)" evidence="2">
    <location>
        <position position="606"/>
    </location>
</feature>
<feature type="sequence conflict" description="In Ref. 3; AAC21591." evidence="8" ref="3">
    <original>C</original>
    <variation>S</variation>
    <location>
        <position position="139"/>
    </location>
</feature>
<feature type="sequence conflict" description="In Ref. 3; AAC21591." evidence="8" ref="3">
    <original>R</original>
    <variation>Q</variation>
    <location>
        <position position="159"/>
    </location>
</feature>
<feature type="sequence conflict" description="In Ref. 3; AAC21591." evidence="8" ref="3">
    <original>Q</original>
    <variation>L</variation>
    <location>
        <position position="287"/>
    </location>
</feature>
<feature type="sequence conflict" description="In Ref. 3; AAC21591." evidence="8" ref="3">
    <original>MST</original>
    <variation>IVP</variation>
    <location>
        <begin position="308"/>
        <end position="310"/>
    </location>
</feature>
<feature type="sequence conflict" description="In Ref. 3; AAC21591." evidence="8" ref="3">
    <original>S</original>
    <variation>L</variation>
    <location>
        <position position="410"/>
    </location>
</feature>
<feature type="sequence conflict" description="In Ref. 3; AAC21591." evidence="8" ref="3">
    <original>E</original>
    <variation>V</variation>
    <location>
        <position position="489"/>
    </location>
</feature>
<feature type="sequence conflict" description="In Ref. 3; AAC21591." evidence="8" ref="3">
    <original>P</original>
    <variation>T</variation>
    <location>
        <position position="635"/>
    </location>
</feature>
<sequence length="752" mass="85707">MSFIDPYQHIIVEHQYSHKFTVVVLRATKVTKGTFGDMLDTPDPYVELFISTTPDSRKRTRHFNNDINPVWNETFEFILDPNQENVLEITLMDANYVMDETLGTATFPVSSMKVGEKKEVPFIFNQVTEMILEMSLEVCSCPDLRFSMALCDQEKTFRRQRKENIKENMKKLLGPKKSEGLYSTRDVPVVAILGSGGGFRAMVGFSGVMKALYESGILDCATYVAGLSGSTWYMSTLYSHPDFPEKGPEEINEELMKNVSHNPLLLLTPQKVKRYVESLWKKKSSGQPVTFTDIFGMLIGETLIQNRMSTTLSSLKEKVSAARCPLPLFTCLHVKPDVSELMFADWVEFSPYEIGMAKYGTFMTPDLFGSKFFMGTVVKKYEENPLHFLMGVWGSAFSILFNRVLGVSGSQNKGSTMEEELENITAKHIVSNDSSDSDDEAQGPKGTENEDAEREYQNDNQASWVHRMLMALVSDSALFNTREGRAGKEHNFMLGLNLNTSYPLSPLRDFSPQDSFDDDELDAAVADPDEFERIYEPLDVKSKKIHVVDSGLTFNLPYPLILRPQRGVDLIISFDFSARPSDTSPPFKELLLAEKWAKMNKLPFPKIDPYVFDREGLKECYVFKPKNPDVEKDCPTIIHFVLANINFRKYKAPGVLRETKEEKEIADFDIFDDPESPFSTFNFQYPNQAFKRLHDLMYFNTLNNIDVIKDAIVESIEYRRQNPSRCSVSLSNVEARKFFNKEFLSKPTAESI</sequence>